<accession>Q54ME1</accession>
<reference key="1">
    <citation type="journal article" date="2005" name="Nature">
        <title>The genome of the social amoeba Dictyostelium discoideum.</title>
        <authorList>
            <person name="Eichinger L."/>
            <person name="Pachebat J.A."/>
            <person name="Gloeckner G."/>
            <person name="Rajandream M.A."/>
            <person name="Sucgang R."/>
            <person name="Berriman M."/>
            <person name="Song J."/>
            <person name="Olsen R."/>
            <person name="Szafranski K."/>
            <person name="Xu Q."/>
            <person name="Tunggal B."/>
            <person name="Kummerfeld S."/>
            <person name="Madera M."/>
            <person name="Konfortov B.A."/>
            <person name="Rivero F."/>
            <person name="Bankier A.T."/>
            <person name="Lehmann R."/>
            <person name="Hamlin N."/>
            <person name="Davies R."/>
            <person name="Gaudet P."/>
            <person name="Fey P."/>
            <person name="Pilcher K."/>
            <person name="Chen G."/>
            <person name="Saunders D."/>
            <person name="Sodergren E.J."/>
            <person name="Davis P."/>
            <person name="Kerhornou A."/>
            <person name="Nie X."/>
            <person name="Hall N."/>
            <person name="Anjard C."/>
            <person name="Hemphill L."/>
            <person name="Bason N."/>
            <person name="Farbrother P."/>
            <person name="Desany B."/>
            <person name="Just E."/>
            <person name="Morio T."/>
            <person name="Rost R."/>
            <person name="Churcher C.M."/>
            <person name="Cooper J."/>
            <person name="Haydock S."/>
            <person name="van Driessche N."/>
            <person name="Cronin A."/>
            <person name="Goodhead I."/>
            <person name="Muzny D.M."/>
            <person name="Mourier T."/>
            <person name="Pain A."/>
            <person name="Lu M."/>
            <person name="Harper D."/>
            <person name="Lindsay R."/>
            <person name="Hauser H."/>
            <person name="James K.D."/>
            <person name="Quiles M."/>
            <person name="Madan Babu M."/>
            <person name="Saito T."/>
            <person name="Buchrieser C."/>
            <person name="Wardroper A."/>
            <person name="Felder M."/>
            <person name="Thangavelu M."/>
            <person name="Johnson D."/>
            <person name="Knights A."/>
            <person name="Loulseged H."/>
            <person name="Mungall K.L."/>
            <person name="Oliver K."/>
            <person name="Price C."/>
            <person name="Quail M.A."/>
            <person name="Urushihara H."/>
            <person name="Hernandez J."/>
            <person name="Rabbinowitsch E."/>
            <person name="Steffen D."/>
            <person name="Sanders M."/>
            <person name="Ma J."/>
            <person name="Kohara Y."/>
            <person name="Sharp S."/>
            <person name="Simmonds M.N."/>
            <person name="Spiegler S."/>
            <person name="Tivey A."/>
            <person name="Sugano S."/>
            <person name="White B."/>
            <person name="Walker D."/>
            <person name="Woodward J.R."/>
            <person name="Winckler T."/>
            <person name="Tanaka Y."/>
            <person name="Shaulsky G."/>
            <person name="Schleicher M."/>
            <person name="Weinstock G.M."/>
            <person name="Rosenthal A."/>
            <person name="Cox E.C."/>
            <person name="Chisholm R.L."/>
            <person name="Gibbs R.A."/>
            <person name="Loomis W.F."/>
            <person name="Platzer M."/>
            <person name="Kay R.R."/>
            <person name="Williams J.G."/>
            <person name="Dear P.H."/>
            <person name="Noegel A.A."/>
            <person name="Barrell B.G."/>
            <person name="Kuspa A."/>
        </authorList>
    </citation>
    <scope>NUCLEOTIDE SEQUENCE [LARGE SCALE GENOMIC DNA]</scope>
    <source>
        <strain>AX4</strain>
    </source>
</reference>
<reference key="2">
    <citation type="journal article" date="2003" name="Mech. Dev.">
        <title>Construction of a gamete-enriched gene pool and RNAi-mediated functional analysis in Dictyostelium discoideum.</title>
        <authorList>
            <person name="Muramoto T."/>
            <person name="Suzuki K."/>
            <person name="Shimizu H."/>
            <person name="Kohara Y."/>
            <person name="Kohriki E."/>
            <person name="Obara S."/>
            <person name="Tanaka Y."/>
            <person name="Urushihara H."/>
        </authorList>
    </citation>
    <scope>DISRUPTION PHENOTYPE</scope>
    <scope>FUNCTION</scope>
    <scope>DEVELOPMENTAL STAGE</scope>
</reference>
<protein>
    <recommendedName>
        <fullName>Gamete and mating-type specific protein A</fullName>
        <ecNumber>3.4.22.-</ecNumber>
    </recommendedName>
</protein>
<name>GMSA_DICDI</name>
<dbReference type="EC" id="3.4.22.-"/>
<dbReference type="EMBL" id="AAFI02000085">
    <property type="protein sequence ID" value="EAL64386.1"/>
    <property type="molecule type" value="Genomic_DNA"/>
</dbReference>
<dbReference type="RefSeq" id="XP_637893.1">
    <property type="nucleotide sequence ID" value="XM_632801.1"/>
</dbReference>
<dbReference type="SMR" id="Q54ME1"/>
<dbReference type="FunCoup" id="Q54ME1">
    <property type="interactions" value="2"/>
</dbReference>
<dbReference type="STRING" id="44689.Q54ME1"/>
<dbReference type="MEROPS" id="C01.A52"/>
<dbReference type="GlyCosmos" id="Q54ME1">
    <property type="glycosylation" value="3 sites, No reported glycans"/>
</dbReference>
<dbReference type="GlyGen" id="Q54ME1">
    <property type="glycosylation" value="4 sites"/>
</dbReference>
<dbReference type="PaxDb" id="44689-DDB0191145"/>
<dbReference type="EnsemblProtists" id="EAL64386">
    <property type="protein sequence ID" value="EAL64386"/>
    <property type="gene ID" value="DDB_G0286015"/>
</dbReference>
<dbReference type="GeneID" id="8625403"/>
<dbReference type="KEGG" id="ddi:DDB_G0286015"/>
<dbReference type="dictyBase" id="DDB_G0286015">
    <property type="gene designation" value="gmsA"/>
</dbReference>
<dbReference type="VEuPathDB" id="AmoebaDB:DDB_G0286015"/>
<dbReference type="eggNOG" id="KOG1543">
    <property type="taxonomic scope" value="Eukaryota"/>
</dbReference>
<dbReference type="HOGENOM" id="CLU_611690_0_0_1"/>
<dbReference type="InParanoid" id="Q54ME1"/>
<dbReference type="OMA" id="YVDSAFQ"/>
<dbReference type="PhylomeDB" id="Q54ME1"/>
<dbReference type="Reactome" id="R-DDI-204005">
    <property type="pathway name" value="COPII-mediated vesicle transport"/>
</dbReference>
<dbReference type="Reactome" id="R-DDI-2132295">
    <property type="pathway name" value="MHC class II antigen presentation"/>
</dbReference>
<dbReference type="Reactome" id="R-DDI-5694530">
    <property type="pathway name" value="Cargo concentration in the ER"/>
</dbReference>
<dbReference type="Reactome" id="R-DDI-6798695">
    <property type="pathway name" value="Neutrophil degranulation"/>
</dbReference>
<dbReference type="PRO" id="PR:Q54ME1"/>
<dbReference type="Proteomes" id="UP000002195">
    <property type="component" value="Chromosome 4"/>
</dbReference>
<dbReference type="GO" id="GO:0009897">
    <property type="term" value="C:external side of plasma membrane"/>
    <property type="evidence" value="ECO:0000250"/>
    <property type="project" value="dictyBase"/>
</dbReference>
<dbReference type="GO" id="GO:0005615">
    <property type="term" value="C:extracellular space"/>
    <property type="evidence" value="ECO:0000318"/>
    <property type="project" value="GO_Central"/>
</dbReference>
<dbReference type="GO" id="GO:0005764">
    <property type="term" value="C:lysosome"/>
    <property type="evidence" value="ECO:0000318"/>
    <property type="project" value="GO_Central"/>
</dbReference>
<dbReference type="GO" id="GO:0004197">
    <property type="term" value="F:cysteine-type endopeptidase activity"/>
    <property type="evidence" value="ECO:0000318"/>
    <property type="project" value="GO_Central"/>
</dbReference>
<dbReference type="GO" id="GO:0008234">
    <property type="term" value="F:cysteine-type peptidase activity"/>
    <property type="evidence" value="ECO:0000250"/>
    <property type="project" value="dictyBase"/>
</dbReference>
<dbReference type="GO" id="GO:0000747">
    <property type="term" value="P:conjugation with cellular fusion"/>
    <property type="evidence" value="ECO:0000315"/>
    <property type="project" value="dictyBase"/>
</dbReference>
<dbReference type="GO" id="GO:0006955">
    <property type="term" value="P:immune response"/>
    <property type="evidence" value="ECO:0000318"/>
    <property type="project" value="GO_Central"/>
</dbReference>
<dbReference type="GO" id="GO:2001235">
    <property type="term" value="P:positive regulation of apoptotic signaling pathway"/>
    <property type="evidence" value="ECO:0000318"/>
    <property type="project" value="GO_Central"/>
</dbReference>
<dbReference type="GO" id="GO:0051603">
    <property type="term" value="P:proteolysis involved in protein catabolic process"/>
    <property type="evidence" value="ECO:0000318"/>
    <property type="project" value="GO_Central"/>
</dbReference>
<dbReference type="GO" id="GO:0019953">
    <property type="term" value="P:sexual reproduction"/>
    <property type="evidence" value="ECO:0000270"/>
    <property type="project" value="dictyBase"/>
</dbReference>
<dbReference type="CDD" id="cd05380">
    <property type="entry name" value="CAP_euk"/>
    <property type="match status" value="1"/>
</dbReference>
<dbReference type="CDD" id="cd02248">
    <property type="entry name" value="Peptidase_C1A"/>
    <property type="match status" value="1"/>
</dbReference>
<dbReference type="FunFam" id="3.40.33.10:FF:000049">
    <property type="entry name" value="Gamete and mating-type specific protein A"/>
    <property type="match status" value="1"/>
</dbReference>
<dbReference type="FunFam" id="3.90.70.10:FF:000288">
    <property type="entry name" value="Gamete and mating-type specific protein A"/>
    <property type="match status" value="1"/>
</dbReference>
<dbReference type="Gene3D" id="3.40.33.10">
    <property type="entry name" value="CAP"/>
    <property type="match status" value="1"/>
</dbReference>
<dbReference type="Gene3D" id="3.90.70.10">
    <property type="entry name" value="Cysteine proteinases"/>
    <property type="match status" value="1"/>
</dbReference>
<dbReference type="InterPro" id="IPR014044">
    <property type="entry name" value="CAP_dom"/>
</dbReference>
<dbReference type="InterPro" id="IPR035940">
    <property type="entry name" value="CAP_sf"/>
</dbReference>
<dbReference type="InterPro" id="IPR038765">
    <property type="entry name" value="Papain-like_cys_pep_sf"/>
</dbReference>
<dbReference type="InterPro" id="IPR000169">
    <property type="entry name" value="Pept_cys_AS"/>
</dbReference>
<dbReference type="InterPro" id="IPR013128">
    <property type="entry name" value="Peptidase_C1A"/>
</dbReference>
<dbReference type="InterPro" id="IPR000668">
    <property type="entry name" value="Peptidase_C1A_C"/>
</dbReference>
<dbReference type="InterPro" id="IPR039417">
    <property type="entry name" value="Peptidase_C1A_papain-like"/>
</dbReference>
<dbReference type="PANTHER" id="PTHR12411">
    <property type="entry name" value="CYSTEINE PROTEASE FAMILY C1-RELATED"/>
    <property type="match status" value="1"/>
</dbReference>
<dbReference type="Pfam" id="PF00188">
    <property type="entry name" value="CAP"/>
    <property type="match status" value="1"/>
</dbReference>
<dbReference type="Pfam" id="PF00112">
    <property type="entry name" value="Peptidase_C1"/>
    <property type="match status" value="1"/>
</dbReference>
<dbReference type="PRINTS" id="PR00705">
    <property type="entry name" value="PAPAIN"/>
</dbReference>
<dbReference type="SMART" id="SM00645">
    <property type="entry name" value="Pept_C1"/>
    <property type="match status" value="1"/>
</dbReference>
<dbReference type="SMART" id="SM00198">
    <property type="entry name" value="SCP"/>
    <property type="match status" value="1"/>
</dbReference>
<dbReference type="SUPFAM" id="SSF54001">
    <property type="entry name" value="Cysteine proteinases"/>
    <property type="match status" value="1"/>
</dbReference>
<dbReference type="SUPFAM" id="SSF55797">
    <property type="entry name" value="PR-1-like"/>
    <property type="match status" value="1"/>
</dbReference>
<dbReference type="PROSITE" id="PS00139">
    <property type="entry name" value="THIOL_PROTEASE_CYS"/>
    <property type="match status" value="1"/>
</dbReference>
<keyword id="KW-0325">Glycoprotein</keyword>
<keyword id="KW-0378">Hydrolase</keyword>
<keyword id="KW-0645">Protease</keyword>
<keyword id="KW-1185">Reference proteome</keyword>
<keyword id="KW-0964">Secreted</keyword>
<keyword id="KW-0732">Signal</keyword>
<keyword id="KW-0788">Thiol protease</keyword>
<proteinExistence type="evidence at transcript level"/>
<evidence type="ECO:0000255" key="1"/>
<evidence type="ECO:0000255" key="2">
    <source>
        <dbReference type="PROSITE-ProRule" id="PRU10088"/>
    </source>
</evidence>
<evidence type="ECO:0000256" key="3">
    <source>
        <dbReference type="SAM" id="MobiDB-lite"/>
    </source>
</evidence>
<evidence type="ECO:0000269" key="4">
    <source>
    </source>
</evidence>
<evidence type="ECO:0000305" key="5"/>
<gene>
    <name type="primary">gmsA</name>
    <name type="ORF">DDB_G0286015</name>
</gene>
<comment type="function">
    <text evidence="4">Thiol protease that seems to be involved in the sexual development.</text>
</comment>
<comment type="subcellular location">
    <subcellularLocation>
        <location evidence="5">Secreted</location>
    </subcellularLocation>
</comment>
<comment type="developmental stage">
    <text evidence="4">Expression is strongly enhanced in the gametes.</text>
</comment>
<comment type="disruption phenotype">
    <text evidence="4">Suppression of cell fusion.</text>
</comment>
<comment type="similarity">
    <text evidence="2">Belongs to the peptidase C1 family.</text>
</comment>
<organism>
    <name type="scientific">Dictyostelium discoideum</name>
    <name type="common">Social amoeba</name>
    <dbReference type="NCBI Taxonomy" id="44689"/>
    <lineage>
        <taxon>Eukaryota</taxon>
        <taxon>Amoebozoa</taxon>
        <taxon>Evosea</taxon>
        <taxon>Eumycetozoa</taxon>
        <taxon>Dictyostelia</taxon>
        <taxon>Dictyosteliales</taxon>
        <taxon>Dictyosteliaceae</taxon>
        <taxon>Dictyostelium</taxon>
    </lineage>
</organism>
<sequence length="448" mass="48674">MKLILVLLCLISTLFVVKGGLSPTEQQIIVSYHNKWRSSPIGPTPSTTIPALKWNATIAAALQSSLDKCDGKFSTMSQYGTNSEWQSWWTPNTYFNLNATLDNIQKGASFYDWNAKGCNSSANYNCQLWTYAVWSKSTSYGCAKTICPDKSEVSCSYYPAGGFKGVLPYTPKTTTPAPTTPAPTTPKPTTPAPTTPKPTTPAPTTPKPTTPAPTTPKPTTPAPTTPKPTTPAPTTPAPTSTLTVDWTSYQTPIRDQGQCGSCWAFASSAALESRYLIKYGTAQKSTLQLSNQNAVNCIASGCNGGWSGNYFNFFKTPGIAYEKDDPYKAVTGTSCITTSSVARFKYTNYGYTEKTKAALLAELKKGPVTIAVYVDSAFQNYKSGIYNSATKYTGINHLVLLVGYDQATDAYKIKNSWGSWWGESGYMRITASNDNLAIFAYNSYYPTF</sequence>
<feature type="signal peptide" evidence="1">
    <location>
        <begin position="1"/>
        <end position="19"/>
    </location>
</feature>
<feature type="chain" id="PRO_0000388254" description="Gamete and mating-type specific protein A">
    <location>
        <begin position="20"/>
        <end position="448"/>
    </location>
</feature>
<feature type="domain" description="SCP">
    <location>
        <begin position="30"/>
        <end position="157"/>
    </location>
</feature>
<feature type="region of interest" description="Disordered" evidence="3">
    <location>
        <begin position="171"/>
        <end position="242"/>
    </location>
</feature>
<feature type="compositionally biased region" description="Pro residues" evidence="3">
    <location>
        <begin position="178"/>
        <end position="236"/>
    </location>
</feature>
<feature type="active site" evidence="2">
    <location>
        <position position="262"/>
    </location>
</feature>
<feature type="active site" evidence="2">
    <location>
        <position position="397"/>
    </location>
</feature>
<feature type="active site" evidence="2">
    <location>
        <position position="415"/>
    </location>
</feature>
<feature type="glycosylation site" description="N-linked (GlcNAc...) asparagine" evidence="1">
    <location>
        <position position="55"/>
    </location>
</feature>
<feature type="glycosylation site" description="N-linked (GlcNAc...) asparagine" evidence="1">
    <location>
        <position position="98"/>
    </location>
</feature>
<feature type="glycosylation site" description="N-linked (GlcNAc...) asparagine" evidence="1">
    <location>
        <position position="119"/>
    </location>
</feature>